<keyword id="KW-0024">Alternative initiation</keyword>
<keyword id="KW-0167">Capsid protein</keyword>
<keyword id="KW-1176">Cytoplasmic inwards viral transport</keyword>
<keyword id="KW-0238">DNA-binding</keyword>
<keyword id="KW-1035">Host cytoplasm</keyword>
<keyword id="KW-0945">Host-virus interaction</keyword>
<keyword id="KW-1177">Microtubular inwards viral transport</keyword>
<keyword id="KW-0597">Phosphoprotein</keyword>
<keyword id="KW-0677">Repeat</keyword>
<keyword id="KW-0694">RNA-binding</keyword>
<keyword id="KW-1144">T=4 icosahedral capsid protein</keyword>
<keyword id="KW-1163">Viral penetration into host nucleus</keyword>
<keyword id="KW-0946">Virion</keyword>
<keyword id="KW-1160">Virus entry into host cell</keyword>
<accession>Q67924</accession>
<dbReference type="EMBL" id="X97850">
    <property type="protein sequence ID" value="CAA66440.1"/>
    <property type="molecule type" value="Genomic_DNA"/>
</dbReference>
<dbReference type="SMR" id="Q67924"/>
<dbReference type="Proteomes" id="UP000007917">
    <property type="component" value="Genome"/>
</dbReference>
<dbReference type="GO" id="GO:0043657">
    <property type="term" value="C:host cell"/>
    <property type="evidence" value="ECO:0007669"/>
    <property type="project" value="GOC"/>
</dbReference>
<dbReference type="GO" id="GO:0030430">
    <property type="term" value="C:host cell cytoplasm"/>
    <property type="evidence" value="ECO:0007669"/>
    <property type="project" value="UniProtKB-SubCell"/>
</dbReference>
<dbReference type="GO" id="GO:0039619">
    <property type="term" value="C:T=4 icosahedral viral capsid"/>
    <property type="evidence" value="ECO:0007669"/>
    <property type="project" value="UniProtKB-UniRule"/>
</dbReference>
<dbReference type="GO" id="GO:0003677">
    <property type="term" value="F:DNA binding"/>
    <property type="evidence" value="ECO:0007669"/>
    <property type="project" value="UniProtKB-UniRule"/>
</dbReference>
<dbReference type="GO" id="GO:0003723">
    <property type="term" value="F:RNA binding"/>
    <property type="evidence" value="ECO:0007669"/>
    <property type="project" value="UniProtKB-UniRule"/>
</dbReference>
<dbReference type="GO" id="GO:0005198">
    <property type="term" value="F:structural molecule activity"/>
    <property type="evidence" value="ECO:0007669"/>
    <property type="project" value="UniProtKB-UniRule"/>
</dbReference>
<dbReference type="GO" id="GO:0075521">
    <property type="term" value="P:microtubule-dependent intracellular transport of viral material towards nucleus"/>
    <property type="evidence" value="ECO:0007669"/>
    <property type="project" value="UniProtKB-UniRule"/>
</dbReference>
<dbReference type="GO" id="GO:0046718">
    <property type="term" value="P:symbiont entry into host cell"/>
    <property type="evidence" value="ECO:0007669"/>
    <property type="project" value="UniProtKB-UniRule"/>
</dbReference>
<dbReference type="GO" id="GO:0075732">
    <property type="term" value="P:viral penetration into host nucleus"/>
    <property type="evidence" value="ECO:0007669"/>
    <property type="project" value="UniProtKB-UniRule"/>
</dbReference>
<dbReference type="FunFam" id="1.10.4090.10:FF:000001">
    <property type="entry name" value="Capsid protein"/>
    <property type="match status" value="1"/>
</dbReference>
<dbReference type="Gene3D" id="1.10.4090.10">
    <property type="entry name" value="Viral capsid, core domain supefamily, Hepatitis B virus"/>
    <property type="match status" value="1"/>
</dbReference>
<dbReference type="HAMAP" id="MF_04076">
    <property type="entry name" value="HBV_HBEAG"/>
    <property type="match status" value="1"/>
</dbReference>
<dbReference type="InterPro" id="IPR002006">
    <property type="entry name" value="Hepatitis_core"/>
</dbReference>
<dbReference type="InterPro" id="IPR036459">
    <property type="entry name" value="Viral_capsid_core_dom_sf_HBV"/>
</dbReference>
<dbReference type="Pfam" id="PF00906">
    <property type="entry name" value="Hepatitis_core"/>
    <property type="match status" value="3"/>
</dbReference>
<dbReference type="SUPFAM" id="SSF47852">
    <property type="entry name" value="Hepatitis B viral capsid (hbcag)"/>
    <property type="match status" value="1"/>
</dbReference>
<reference key="1">
    <citation type="journal article" date="1996" name="J. Viral Hepat.">
        <title>Whole genome analysis of hepatitis B virus from four cases of fulminant hepatitis: genetic variability and its potential role in disease pathogenicity.</title>
        <authorList>
            <person name="Alexopoulou A."/>
            <person name="Karayiannis P."/>
            <person name="Hadziyannis S.J."/>
        </authorList>
    </citation>
    <scope>NUCLEOTIDE SEQUENCE [GENOMIC DNA]</scope>
</reference>
<gene>
    <name evidence="1" type="primary">C</name>
</gene>
<organismHost>
    <name type="scientific">Homo sapiens</name>
    <name type="common">Human</name>
    <dbReference type="NCBI Taxonomy" id="9606"/>
</organismHost>
<organismHost>
    <name type="scientific">Pan troglodytes</name>
    <name type="common">Chimpanzee</name>
    <dbReference type="NCBI Taxonomy" id="9598"/>
</organismHost>
<name>CAPSD_HBVB6</name>
<organism>
    <name type="scientific">Hepatitis B virus genotype B2 subtype adw (isolate China/patient4/1996)</name>
    <name type="common">HBV-B</name>
    <dbReference type="NCBI Taxonomy" id="489463"/>
    <lineage>
        <taxon>Viruses</taxon>
        <taxon>Riboviria</taxon>
        <taxon>Pararnavirae</taxon>
        <taxon>Artverviricota</taxon>
        <taxon>Revtraviricetes</taxon>
        <taxon>Blubervirales</taxon>
        <taxon>Hepadnaviridae</taxon>
        <taxon>Orthohepadnavirus</taxon>
        <taxon>Hepatitis B virus</taxon>
    </lineage>
</organism>
<comment type="function">
    <text evidence="1">Self assembles to form an icosahedral capsid. Most capsids appear to be large particles with an icosahedral symmetry of T=4 and consist of 240 copies of capsid protein, though a fraction forms smaller T=3 particles consisting of 180 capsid proteins. Entering capsids are transported along microtubules to the nucleus. Phosphorylation of the capsid is thought to induce exposure of nuclear localization signal in the C-terminal portion of the capsid protein that allows binding to the nuclear pore complex via the importin (karyopherin-) alpha and beta. Capsids are imported in intact form through the nuclear pore into the nuclear basket, where it probably binds NUP153. Only capsids that contain the mature viral genome can release the viral DNA and capsid protein into the nucleoplasm. Immature capsids get stuck in the basket. Capsids encapsulate the pre-genomic RNA and the P protein. Pre-genomic RNA is reverse-transcribed into DNA while the capsid is still in the cytoplasm. The capsid can then either be directed to the nucleus, providing more genomes for transcription, or bud through the endoplasmic reticulum to provide new virions.</text>
</comment>
<comment type="subunit">
    <text evidence="1">Homodimerizes, then multimerizes. Interacts with cytosol exposed regions of viral L glycoprotein present in the reticulum-to-Golgi compartment. Interacts with human FLNB. Phosphorylated form interacts with host importin alpha; this interaction depends on the exposure of the NLS, which itself depends upon genome maturation and/or phosphorylation of the capsid protein. Interacts with host NUP153.</text>
</comment>
<comment type="subcellular location">
    <subcellularLocation>
        <location evidence="1">Virion</location>
    </subcellularLocation>
    <subcellularLocation>
        <location evidence="1">Host cytoplasm</location>
    </subcellularLocation>
</comment>
<comment type="alternative products">
    <event type="alternative initiation"/>
    <isoform>
        <id>Q67924-1</id>
        <name>Capsid protein</name>
        <sequence type="displayed"/>
    </isoform>
    <isoform>
        <id>P0C6H0-1</id>
        <name>External core antigen</name>
        <sequence type="external"/>
    </isoform>
</comment>
<comment type="PTM">
    <text evidence="1">Phosphorylated by host SRPK1, SRPK2, and maybe protein kinase C or GAPDH. Phosphorylation is critical for pregenomic RNA packaging. Protein kinase C phosphorylation is stimulated by HBx protein and may play a role in transport of the viral genome to the nucleus at the late step during the viral replication cycle.</text>
</comment>
<comment type="similarity">
    <text evidence="1">Belongs to the orthohepadnavirus core antigen family.</text>
</comment>
<feature type="chain" id="PRO_0000324359" description="Capsid protein">
    <location>
        <begin position="1"/>
        <end position="183"/>
    </location>
</feature>
<feature type="repeat" description="1; half-length">
    <location>
        <begin position="155"/>
        <end position="161"/>
    </location>
</feature>
<feature type="repeat" description="2">
    <location>
        <begin position="162"/>
        <end position="169"/>
    </location>
</feature>
<feature type="repeat" description="3">
    <location>
        <begin position="170"/>
        <end position="177"/>
    </location>
</feature>
<feature type="region of interest" description="Disordered" evidence="2">
    <location>
        <begin position="143"/>
        <end position="183"/>
    </location>
</feature>
<feature type="region of interest" description="3 X 8 AA repeats of S-P-R-R-R-[PR]-S-Q">
    <location>
        <begin position="155"/>
        <end position="177"/>
    </location>
</feature>
<feature type="region of interest" description="RNA binding" evidence="1">
    <location>
        <begin position="177"/>
        <end position="183"/>
    </location>
</feature>
<feature type="short sequence motif" description="Bipartite nuclear localization signal" evidence="1">
    <location>
        <begin position="158"/>
        <end position="175"/>
    </location>
</feature>
<feature type="compositionally biased region" description="Basic residues" evidence="2">
    <location>
        <begin position="149"/>
        <end position="177"/>
    </location>
</feature>
<feature type="modified residue" description="Phosphoserine; by host" evidence="1">
    <location>
        <position position="155"/>
    </location>
</feature>
<feature type="modified residue" description="Phosphoserine; by host" evidence="1">
    <location>
        <position position="162"/>
    </location>
</feature>
<feature type="modified residue" description="Phosphoserine; by host" evidence="1">
    <location>
        <position position="170"/>
    </location>
</feature>
<protein>
    <recommendedName>
        <fullName evidence="1">Capsid protein</fullName>
    </recommendedName>
    <alternativeName>
        <fullName evidence="1">Core antigen</fullName>
    </alternativeName>
    <alternativeName>
        <fullName evidence="1">Core protein</fullName>
    </alternativeName>
    <alternativeName>
        <fullName evidence="1">HBcAg</fullName>
    </alternativeName>
    <alternativeName>
        <fullName evidence="1">p21.5</fullName>
    </alternativeName>
</protein>
<proteinExistence type="inferred from homology"/>
<evidence type="ECO:0000255" key="1">
    <source>
        <dbReference type="HAMAP-Rule" id="MF_04076"/>
    </source>
</evidence>
<evidence type="ECO:0000256" key="2">
    <source>
        <dbReference type="SAM" id="MobiDB-lite"/>
    </source>
</evidence>
<sequence length="183" mass="20980">MDIDPYKEFGASVELLSFLPSDFFPSIRDLLDTASALYREALESPEHCSPHHTALRQAILCWGELMNLATWVGGNLEDPASRELVVSYVNVNMGLKLRQILWFHISCLTFGRETVLEYLVSFGVWIRTPTAYRPPNAPILSTLPENAVVRRRGRSPRRRTPSPRRRRSQSPRRRRSQSRGSQC</sequence>